<comment type="function">
    <text evidence="1 2 6 7">Substrate recognition component of a DCX (DDB1-CUL4-X-box) E3 protein ligase complex that mediates the ubiquitination and subsequent proteasomal degradation of target proteins, such as MEIS2 (Probable). Normal degradation of key regulatory proteins is required for normal limb outgrowth and expression of the fibroblast growth factor FGF8 (PubMed:20223979). Maintains presynaptic glutamate release and consequently cognitive functions, such as memory and learning, by negatively regulating large-conductance calcium-activated potassium (BK) channels in excitatory neurons. Likely to function by regulating the assembly and neuronal surface expression of BK channels via its interaction with KCNT1 (By similarity). May also be involved in regulating anxiety-like behaviors via a BK channel-independent mechanism (By similarity).</text>
</comment>
<comment type="pathway">
    <text evidence="6">Protein modification; protein ubiquitination.</text>
</comment>
<comment type="subunit">
    <text evidence="2 7">Component of a DCX (DDB1-CUL4-X-box) protein ligase complex.</text>
</comment>
<comment type="subcellular location">
    <subcellularLocation>
        <location evidence="2">Cytoplasm</location>
    </subcellularLocation>
    <subcellularLocation>
        <location evidence="2">Nucleus</location>
    </subcellularLocation>
</comment>
<comment type="tissue specificity">
    <text evidence="6">Highly expressed in brain, head, vasculature otic vesicles and developing pectoral fins.</text>
</comment>
<comment type="disruption phenotype">
    <text evidence="6">Specific defects in fin and otic vesicle development.</text>
</comment>
<comment type="miscellaneous">
    <text evidence="8">Thalidomide is teratogenic in human, chicken and zebrafish, but not in mice. Binding of thalidomide and related drugs changes the substrate specificity of the human DCX (DDB1-CUL4-X-box) E3 protein ligase complex, leading to decreased degradation of endogenous target proteins and increased degradation of other proteins that are not normal substrates. This is probably the underlying cause of the teratogenic activity of thalidomide, possibly due to abnormal regulation of the BMP and FGF8 signaling pathways.</text>
</comment>
<comment type="similarity">
    <text evidence="7">Belongs to the CRBN family.</text>
</comment>
<gene>
    <name type="primary">crbn</name>
    <name type="ORF">zgc:92404</name>
</gene>
<dbReference type="EMBL" id="BC080253">
    <property type="protein sequence ID" value="AAH80253.1"/>
    <property type="molecule type" value="mRNA"/>
</dbReference>
<dbReference type="RefSeq" id="NP_001003996.1">
    <property type="nucleotide sequence ID" value="NM_001003996.1"/>
</dbReference>
<dbReference type="SMR" id="Q68EH9"/>
<dbReference type="BioGRID" id="92546">
    <property type="interactions" value="1"/>
</dbReference>
<dbReference type="FunCoup" id="Q68EH9">
    <property type="interactions" value="1884"/>
</dbReference>
<dbReference type="STRING" id="7955.ENSDARP00000062723"/>
<dbReference type="PaxDb" id="7955-ENSDARP00000062723"/>
<dbReference type="GeneID" id="445491"/>
<dbReference type="KEGG" id="dre:445491"/>
<dbReference type="AGR" id="ZFIN:ZDB-GENE-040822-43"/>
<dbReference type="CTD" id="51185"/>
<dbReference type="ZFIN" id="ZDB-GENE-040822-43">
    <property type="gene designation" value="crbn"/>
</dbReference>
<dbReference type="eggNOG" id="KOG1400">
    <property type="taxonomic scope" value="Eukaryota"/>
</dbReference>
<dbReference type="InParanoid" id="Q68EH9"/>
<dbReference type="OrthoDB" id="267517at2759"/>
<dbReference type="PhylomeDB" id="Q68EH9"/>
<dbReference type="UniPathway" id="UPA00143"/>
<dbReference type="PRO" id="PR:Q68EH9"/>
<dbReference type="Proteomes" id="UP000000437">
    <property type="component" value="Chromosome 6"/>
</dbReference>
<dbReference type="GO" id="GO:0031464">
    <property type="term" value="C:Cul4A-RING E3 ubiquitin ligase complex"/>
    <property type="evidence" value="ECO:0000250"/>
    <property type="project" value="UniProtKB"/>
</dbReference>
<dbReference type="GO" id="GO:0005737">
    <property type="term" value="C:cytoplasm"/>
    <property type="evidence" value="ECO:0000250"/>
    <property type="project" value="UniProtKB"/>
</dbReference>
<dbReference type="GO" id="GO:0005634">
    <property type="term" value="C:nucleus"/>
    <property type="evidence" value="ECO:0000250"/>
    <property type="project" value="UniProtKB"/>
</dbReference>
<dbReference type="GO" id="GO:0000151">
    <property type="term" value="C:ubiquitin ligase complex"/>
    <property type="evidence" value="ECO:0000314"/>
    <property type="project" value="ZFIN"/>
</dbReference>
<dbReference type="GO" id="GO:0046872">
    <property type="term" value="F:metal ion binding"/>
    <property type="evidence" value="ECO:0007669"/>
    <property type="project" value="UniProtKB-KW"/>
</dbReference>
<dbReference type="GO" id="GO:0008283">
    <property type="term" value="P:cell population proliferation"/>
    <property type="evidence" value="ECO:0000315"/>
    <property type="project" value="ZFIN"/>
</dbReference>
<dbReference type="GO" id="GO:0035118">
    <property type="term" value="P:embryonic pectoral fin morphogenesis"/>
    <property type="evidence" value="ECO:0000315"/>
    <property type="project" value="ZFIN"/>
</dbReference>
<dbReference type="GO" id="GO:0033333">
    <property type="term" value="P:fin development"/>
    <property type="evidence" value="ECO:0000315"/>
    <property type="project" value="UniProtKB"/>
</dbReference>
<dbReference type="GO" id="GO:0060173">
    <property type="term" value="P:limb development"/>
    <property type="evidence" value="ECO:0000315"/>
    <property type="project" value="UniProtKB"/>
</dbReference>
<dbReference type="GO" id="GO:0071599">
    <property type="term" value="P:otic vesicle development"/>
    <property type="evidence" value="ECO:0000315"/>
    <property type="project" value="UniProtKB"/>
</dbReference>
<dbReference type="GO" id="GO:0071600">
    <property type="term" value="P:otic vesicle morphogenesis"/>
    <property type="evidence" value="ECO:0000315"/>
    <property type="project" value="ZFIN"/>
</dbReference>
<dbReference type="GO" id="GO:0043161">
    <property type="term" value="P:proteasome-mediated ubiquitin-dependent protein catabolic process"/>
    <property type="evidence" value="ECO:0000250"/>
    <property type="project" value="UniProtKB"/>
</dbReference>
<dbReference type="GO" id="GO:0016567">
    <property type="term" value="P:protein ubiquitination"/>
    <property type="evidence" value="ECO:0000250"/>
    <property type="project" value="UniProtKB"/>
</dbReference>
<dbReference type="CDD" id="cd15777">
    <property type="entry name" value="CRBN_C_like"/>
    <property type="match status" value="1"/>
</dbReference>
<dbReference type="FunFam" id="1.20.58.1480:FF:000004">
    <property type="entry name" value="Cereblon, isoform CRA_c"/>
    <property type="match status" value="1"/>
</dbReference>
<dbReference type="FunFam" id="2.170.150.20:FF:000002">
    <property type="entry name" value="Cereblon, isoform CRA_c"/>
    <property type="match status" value="1"/>
</dbReference>
<dbReference type="FunFam" id="2.30.130.40:FF:000002">
    <property type="entry name" value="Cereblon, isoform CRA_c"/>
    <property type="match status" value="1"/>
</dbReference>
<dbReference type="Gene3D" id="1.20.58.1480">
    <property type="match status" value="1"/>
</dbReference>
<dbReference type="Gene3D" id="2.30.130.40">
    <property type="entry name" value="LON domain-like"/>
    <property type="match status" value="1"/>
</dbReference>
<dbReference type="Gene3D" id="2.170.150.20">
    <property type="entry name" value="Peptide methionine sulfoxide reductase"/>
    <property type="match status" value="1"/>
</dbReference>
<dbReference type="InterPro" id="IPR034750">
    <property type="entry name" value="CULT"/>
</dbReference>
<dbReference type="InterPro" id="IPR003111">
    <property type="entry name" value="Lon_prtase_N"/>
</dbReference>
<dbReference type="InterPro" id="IPR046336">
    <property type="entry name" value="Lon_prtase_N_sf"/>
</dbReference>
<dbReference type="InterPro" id="IPR015947">
    <property type="entry name" value="PUA-like_sf"/>
</dbReference>
<dbReference type="InterPro" id="IPR004910">
    <property type="entry name" value="Yippee/Mis18/Cereblon"/>
</dbReference>
<dbReference type="PANTHER" id="PTHR14255">
    <property type="entry name" value="CEREBLON"/>
    <property type="match status" value="1"/>
</dbReference>
<dbReference type="PANTHER" id="PTHR14255:SF4">
    <property type="entry name" value="PROTEIN CEREBLON"/>
    <property type="match status" value="1"/>
</dbReference>
<dbReference type="Pfam" id="PF02190">
    <property type="entry name" value="LON_substr_bdg"/>
    <property type="match status" value="1"/>
</dbReference>
<dbReference type="Pfam" id="PF03226">
    <property type="entry name" value="Yippee-Mis18"/>
    <property type="match status" value="1"/>
</dbReference>
<dbReference type="SMART" id="SM00464">
    <property type="entry name" value="LON"/>
    <property type="match status" value="1"/>
</dbReference>
<dbReference type="SUPFAM" id="SSF88697">
    <property type="entry name" value="PUA domain-like"/>
    <property type="match status" value="1"/>
</dbReference>
<dbReference type="PROSITE" id="PS51788">
    <property type="entry name" value="CULT"/>
    <property type="match status" value="1"/>
</dbReference>
<dbReference type="PROSITE" id="PS51787">
    <property type="entry name" value="LON_N"/>
    <property type="match status" value="1"/>
</dbReference>
<name>CRBN_DANRE</name>
<protein>
    <recommendedName>
        <fullName>Protein cereblon</fullName>
        <shortName>zcrbn</shortName>
    </recommendedName>
</protein>
<proteinExistence type="evidence at protein level"/>
<sequence length="431" mass="49095">MGNQLQLLPENEEEEEDDMETEDRDGEDVEKPSIINFDTSLPTSHAYLGSDMEEFHGRTLHDEDSVQNLPVLPHVALILIPGQTLPLQLFRPQEVSMFRNLVSQDRTFAVLAHSPDPSGTETKAEFGTTAEIYAFREEQEYGIETVKIKAVGRQRFRVHDIRTQADGIRQAKVQILPERILPDPLCALQFLPRLHTHSPQTKHTQTTPPQKRCSQNYRQKKLHCASMTSWPPWVYSLYDSKTLMSRVKKQLHEWDENLKDESLPTNPTDFSYRVAACLPIDDALRLQLLKIGSAIQRLRCELDIMDRCTSLCCKQCQDTEITSKNEIFSLSLYGPMAAYVNPHGYVHETLTVYKASNLNLIGRPSTLHSWFPGYAWTIAQCRTCSSHMGWKFSAVKKDLSPPRFWGLTRSALLPTIPQGEEGVEGSRLLCL</sequence>
<keyword id="KW-0963">Cytoplasm</keyword>
<keyword id="KW-0479">Metal-binding</keyword>
<keyword id="KW-0539">Nucleus</keyword>
<keyword id="KW-1185">Reference proteome</keyword>
<keyword id="KW-0833">Ubl conjugation pathway</keyword>
<keyword id="KW-0862">Zinc</keyword>
<accession>Q68EH9</accession>
<reference key="1">
    <citation type="submission" date="2004-08" db="EMBL/GenBank/DDBJ databases">
        <authorList>
            <consortium name="NIH - Zebrafish Gene Collection (ZGC) project"/>
        </authorList>
    </citation>
    <scope>NUCLEOTIDE SEQUENCE [LARGE SCALE MRNA]</scope>
</reference>
<reference key="2">
    <citation type="journal article" date="2010" name="Science">
        <title>Identification of a primary target of thalidomide teratogenicity.</title>
        <authorList>
            <person name="Ito T."/>
            <person name="Ando H."/>
            <person name="Suzuki T."/>
            <person name="Ogura T."/>
            <person name="Hotta K."/>
            <person name="Imamura Y."/>
            <person name="Yamaguchi Y."/>
            <person name="Handa H."/>
        </authorList>
    </citation>
    <scope>FUNCTION</scope>
    <scope>THALIDOMIDE-BINDING</scope>
    <scope>DISRUPTION PHENOTYPE</scope>
    <scope>MUTAGENESIS OF TYR-374 AND TRP-376</scope>
    <scope>TISSUE SPECIFICITY</scope>
</reference>
<organism>
    <name type="scientific">Danio rerio</name>
    <name type="common">Zebrafish</name>
    <name type="synonym">Brachydanio rerio</name>
    <dbReference type="NCBI Taxonomy" id="7955"/>
    <lineage>
        <taxon>Eukaryota</taxon>
        <taxon>Metazoa</taxon>
        <taxon>Chordata</taxon>
        <taxon>Craniata</taxon>
        <taxon>Vertebrata</taxon>
        <taxon>Euteleostomi</taxon>
        <taxon>Actinopterygii</taxon>
        <taxon>Neopterygii</taxon>
        <taxon>Teleostei</taxon>
        <taxon>Ostariophysi</taxon>
        <taxon>Cypriniformes</taxon>
        <taxon>Danionidae</taxon>
        <taxon>Danioninae</taxon>
        <taxon>Danio</taxon>
    </lineage>
</organism>
<feature type="chain" id="PRO_0000393877" description="Protein cereblon">
    <location>
        <begin position="1"/>
        <end position="431"/>
    </location>
</feature>
<feature type="domain" description="Lon N-terminal" evidence="3">
    <location>
        <begin position="69"/>
        <end position="309"/>
    </location>
</feature>
<feature type="domain" description="CULT" evidence="4">
    <location>
        <begin position="308"/>
        <end position="416"/>
    </location>
</feature>
<feature type="region of interest" description="Disordered" evidence="5">
    <location>
        <begin position="1"/>
        <end position="36"/>
    </location>
</feature>
<feature type="compositionally biased region" description="Acidic residues" evidence="5">
    <location>
        <begin position="10"/>
        <end position="28"/>
    </location>
</feature>
<feature type="binding site" evidence="2">
    <location>
        <position position="313"/>
    </location>
    <ligand>
        <name>Zn(2+)</name>
        <dbReference type="ChEBI" id="CHEBI:29105"/>
    </ligand>
</feature>
<feature type="binding site" evidence="2">
    <location>
        <position position="316"/>
    </location>
    <ligand>
        <name>Zn(2+)</name>
        <dbReference type="ChEBI" id="CHEBI:29105"/>
    </ligand>
</feature>
<feature type="binding site" evidence="2">
    <location>
        <position position="368"/>
    </location>
    <ligand>
        <name>(S)-thalidomide</name>
        <dbReference type="ChEBI" id="CHEBI:61918"/>
    </ligand>
</feature>
<feature type="binding site" evidence="2">
    <location>
        <position position="370"/>
    </location>
    <ligand>
        <name>(S)-thalidomide</name>
        <dbReference type="ChEBI" id="CHEBI:61918"/>
    </ligand>
</feature>
<feature type="binding site" evidence="2">
    <location>
        <position position="376"/>
    </location>
    <ligand>
        <name>(S)-thalidomide</name>
        <dbReference type="ChEBI" id="CHEBI:61918"/>
    </ligand>
</feature>
<feature type="binding site" evidence="2">
    <location>
        <position position="381"/>
    </location>
    <ligand>
        <name>Zn(2+)</name>
        <dbReference type="ChEBI" id="CHEBI:29105"/>
    </ligand>
</feature>
<feature type="binding site" evidence="2">
    <location>
        <position position="384"/>
    </location>
    <ligand>
        <name>Zn(2+)</name>
        <dbReference type="ChEBI" id="CHEBI:29105"/>
    </ligand>
</feature>
<feature type="mutagenesis site" description="Abolishes thalidomide-binding; when associated with A-376." evidence="6">
    <original>Y</original>
    <variation>A</variation>
    <location>
        <position position="374"/>
    </location>
</feature>
<feature type="mutagenesis site" description="Abolishes thalidomide-binding; when associated with A-374." evidence="6">
    <original>W</original>
    <variation>A</variation>
    <location>
        <position position="376"/>
    </location>
</feature>
<evidence type="ECO:0000250" key="1">
    <source>
        <dbReference type="UniProtKB" id="Q8C7D2"/>
    </source>
</evidence>
<evidence type="ECO:0000250" key="2">
    <source>
        <dbReference type="UniProtKB" id="Q96SW2"/>
    </source>
</evidence>
<evidence type="ECO:0000255" key="3">
    <source>
        <dbReference type="PROSITE-ProRule" id="PRU01123"/>
    </source>
</evidence>
<evidence type="ECO:0000255" key="4">
    <source>
        <dbReference type="PROSITE-ProRule" id="PRU01124"/>
    </source>
</evidence>
<evidence type="ECO:0000256" key="5">
    <source>
        <dbReference type="SAM" id="MobiDB-lite"/>
    </source>
</evidence>
<evidence type="ECO:0000269" key="6">
    <source>
    </source>
</evidence>
<evidence type="ECO:0000305" key="7"/>
<evidence type="ECO:0000305" key="8">
    <source>
    </source>
</evidence>